<reference key="1">
    <citation type="journal article" date="2009" name="Environ. Microbiol.">
        <title>Contribution of mobile genetic elements to Desulfovibrio vulgaris genome plasticity.</title>
        <authorList>
            <person name="Walker C.B."/>
            <person name="Stolyar S."/>
            <person name="Chivian D."/>
            <person name="Pinel N."/>
            <person name="Gabster J.A."/>
            <person name="Dehal P.S."/>
            <person name="He Z."/>
            <person name="Yang Z.K."/>
            <person name="Yen H.C."/>
            <person name="Zhou J."/>
            <person name="Wall J.D."/>
            <person name="Hazen T.C."/>
            <person name="Arkin A.P."/>
            <person name="Stahl D.A."/>
        </authorList>
    </citation>
    <scope>NUCLEOTIDE SEQUENCE [LARGE SCALE GENOMIC DNA]</scope>
    <source>
        <strain>DP4</strain>
    </source>
</reference>
<name>SYGB_NITV4</name>
<proteinExistence type="inferred from homology"/>
<keyword id="KW-0030">Aminoacyl-tRNA synthetase</keyword>
<keyword id="KW-0067">ATP-binding</keyword>
<keyword id="KW-0963">Cytoplasm</keyword>
<keyword id="KW-0436">Ligase</keyword>
<keyword id="KW-0547">Nucleotide-binding</keyword>
<keyword id="KW-0648">Protein biosynthesis</keyword>
<feature type="chain" id="PRO_1000197182" description="Glycine--tRNA ligase beta subunit">
    <location>
        <begin position="1"/>
        <end position="696"/>
    </location>
</feature>
<comment type="catalytic activity">
    <reaction evidence="1">
        <text>tRNA(Gly) + glycine + ATP = glycyl-tRNA(Gly) + AMP + diphosphate</text>
        <dbReference type="Rhea" id="RHEA:16013"/>
        <dbReference type="Rhea" id="RHEA-COMP:9664"/>
        <dbReference type="Rhea" id="RHEA-COMP:9683"/>
        <dbReference type="ChEBI" id="CHEBI:30616"/>
        <dbReference type="ChEBI" id="CHEBI:33019"/>
        <dbReference type="ChEBI" id="CHEBI:57305"/>
        <dbReference type="ChEBI" id="CHEBI:78442"/>
        <dbReference type="ChEBI" id="CHEBI:78522"/>
        <dbReference type="ChEBI" id="CHEBI:456215"/>
        <dbReference type="EC" id="6.1.1.14"/>
    </reaction>
</comment>
<comment type="subunit">
    <text evidence="1">Tetramer of two alpha and two beta subunits.</text>
</comment>
<comment type="subcellular location">
    <subcellularLocation>
        <location evidence="1">Cytoplasm</location>
    </subcellularLocation>
</comment>
<comment type="similarity">
    <text evidence="1">Belongs to the class-II aminoacyl-tRNA synthetase family.</text>
</comment>
<dbReference type="EC" id="6.1.1.14" evidence="1"/>
<dbReference type="EMBL" id="CP000527">
    <property type="protein sequence ID" value="ABM28285.1"/>
    <property type="molecule type" value="Genomic_DNA"/>
</dbReference>
<dbReference type="RefSeq" id="WP_011792161.1">
    <property type="nucleotide sequence ID" value="NC_008751.1"/>
</dbReference>
<dbReference type="SMR" id="A1VCW9"/>
<dbReference type="KEGG" id="dvl:Dvul_1266"/>
<dbReference type="HOGENOM" id="CLU_007220_2_2_7"/>
<dbReference type="Proteomes" id="UP000009173">
    <property type="component" value="Chromosome"/>
</dbReference>
<dbReference type="GO" id="GO:0005829">
    <property type="term" value="C:cytosol"/>
    <property type="evidence" value="ECO:0007669"/>
    <property type="project" value="TreeGrafter"/>
</dbReference>
<dbReference type="GO" id="GO:0004814">
    <property type="term" value="F:arginine-tRNA ligase activity"/>
    <property type="evidence" value="ECO:0007669"/>
    <property type="project" value="InterPro"/>
</dbReference>
<dbReference type="GO" id="GO:0005524">
    <property type="term" value="F:ATP binding"/>
    <property type="evidence" value="ECO:0007669"/>
    <property type="project" value="UniProtKB-UniRule"/>
</dbReference>
<dbReference type="GO" id="GO:0004820">
    <property type="term" value="F:glycine-tRNA ligase activity"/>
    <property type="evidence" value="ECO:0007669"/>
    <property type="project" value="UniProtKB-UniRule"/>
</dbReference>
<dbReference type="GO" id="GO:0006420">
    <property type="term" value="P:arginyl-tRNA aminoacylation"/>
    <property type="evidence" value="ECO:0007669"/>
    <property type="project" value="InterPro"/>
</dbReference>
<dbReference type="GO" id="GO:0006426">
    <property type="term" value="P:glycyl-tRNA aminoacylation"/>
    <property type="evidence" value="ECO:0007669"/>
    <property type="project" value="UniProtKB-UniRule"/>
</dbReference>
<dbReference type="HAMAP" id="MF_00255">
    <property type="entry name" value="Gly_tRNA_synth_beta"/>
    <property type="match status" value="1"/>
</dbReference>
<dbReference type="InterPro" id="IPR008909">
    <property type="entry name" value="DALR_anticod-bd"/>
</dbReference>
<dbReference type="InterPro" id="IPR015944">
    <property type="entry name" value="Gly-tRNA-synth_bsu"/>
</dbReference>
<dbReference type="InterPro" id="IPR006194">
    <property type="entry name" value="Gly-tRNA-synth_heterodimer"/>
</dbReference>
<dbReference type="NCBIfam" id="TIGR00211">
    <property type="entry name" value="glyS"/>
    <property type="match status" value="1"/>
</dbReference>
<dbReference type="PANTHER" id="PTHR30075:SF2">
    <property type="entry name" value="GLYCINE--TRNA LIGASE, CHLOROPLASTIC_MITOCHONDRIAL 2"/>
    <property type="match status" value="1"/>
</dbReference>
<dbReference type="PANTHER" id="PTHR30075">
    <property type="entry name" value="GLYCYL-TRNA SYNTHETASE"/>
    <property type="match status" value="1"/>
</dbReference>
<dbReference type="Pfam" id="PF05746">
    <property type="entry name" value="DALR_1"/>
    <property type="match status" value="1"/>
</dbReference>
<dbReference type="Pfam" id="PF02092">
    <property type="entry name" value="tRNA_synt_2f"/>
    <property type="match status" value="1"/>
</dbReference>
<dbReference type="PRINTS" id="PR01045">
    <property type="entry name" value="TRNASYNTHGB"/>
</dbReference>
<dbReference type="SUPFAM" id="SSF109604">
    <property type="entry name" value="HD-domain/PDEase-like"/>
    <property type="match status" value="1"/>
</dbReference>
<dbReference type="PROSITE" id="PS50861">
    <property type="entry name" value="AA_TRNA_LIGASE_II_GLYAB"/>
    <property type="match status" value="1"/>
</dbReference>
<evidence type="ECO:0000255" key="1">
    <source>
        <dbReference type="HAMAP-Rule" id="MF_00255"/>
    </source>
</evidence>
<gene>
    <name evidence="1" type="primary">glyS</name>
    <name type="ordered locus">Dvul_1266</name>
</gene>
<organism>
    <name type="scientific">Nitratidesulfovibrio vulgaris (strain DP4)</name>
    <name type="common">Desulfovibrio vulgaris</name>
    <dbReference type="NCBI Taxonomy" id="391774"/>
    <lineage>
        <taxon>Bacteria</taxon>
        <taxon>Pseudomonadati</taxon>
        <taxon>Thermodesulfobacteriota</taxon>
        <taxon>Desulfovibrionia</taxon>
        <taxon>Desulfovibrionales</taxon>
        <taxon>Desulfovibrionaceae</taxon>
        <taxon>Nitratidesulfovibrio</taxon>
    </lineage>
</organism>
<sequence>MSQFVLEIGTEELPARFLPALERELAERFTRALADAGIECDPVCVMSTPRRAVVRMDAVNPVQSESEEVVTGPPARIAFTPEGGLTKAAEGFARTQGVEVADIFRLTTDKGEYIAVRKHMGGARSIDLLRDICPAIIGALPFPKRMRWGSGDFTYARPMRWLLALFDESVVDFEVGGVRSGNITYGHRIHGAGPLTVAHAGDYERVIREQGGVTPVGEERRNAVVTGGNTLATAAGGKVIWKDSLLDEVQGLVEHPVPCLGNIDPSFLELPREVLLTSMESHQKSFGVEDAEGRLMPHFLTVLNLTPLDGDLVRKGWERVLRARLEDARFFWKTDLASSFDAWLASLDNVIFLGPLGSMGDKTRRLEQLCAWLASEVGFDDATAAARAGRLSKGDLVSGMVGEFDTLQGIMGGIYARRMGEAEAVAAAIAEQYLPAGPDSPVPSSMCGALLSIADKADTLAGCFGLGMIPTGAADPYALRRCVLGIARIILEHGLQLDVRGLFAKAFALYGERAWKLAPEDALVKLDEFFMARLRNLFIANGYETLLVEAVLAAGCDDVRSAGARLEALAAFSRRDDFASAVLTFKRAANIIRKQGGDSDVALDGAWKADLLVEDAERHLAASLEAMFPRFDGLWAEGDYPALFGLLGELRPVVDGFFEGVMVMSDDAALRTNRLNLLQALVGRLSRLADFGALQM</sequence>
<protein>
    <recommendedName>
        <fullName evidence="1">Glycine--tRNA ligase beta subunit</fullName>
        <ecNumber evidence="1">6.1.1.14</ecNumber>
    </recommendedName>
    <alternativeName>
        <fullName evidence="1">Glycyl-tRNA synthetase beta subunit</fullName>
        <shortName evidence="1">GlyRS</shortName>
    </alternativeName>
</protein>
<accession>A1VCW9</accession>